<gene>
    <name evidence="2" type="primary">argF</name>
    <name type="ordered locus">Csac_2229</name>
</gene>
<feature type="chain" id="PRO_1000084836" description="Ornithine carbamoyltransferase">
    <location>
        <begin position="1"/>
        <end position="308"/>
    </location>
</feature>
<feature type="binding site" evidence="2">
    <location>
        <begin position="51"/>
        <end position="54"/>
    </location>
    <ligand>
        <name>carbamoyl phosphate</name>
        <dbReference type="ChEBI" id="CHEBI:58228"/>
    </ligand>
</feature>
<feature type="binding site" evidence="2">
    <location>
        <position position="78"/>
    </location>
    <ligand>
        <name>carbamoyl phosphate</name>
        <dbReference type="ChEBI" id="CHEBI:58228"/>
    </ligand>
</feature>
<feature type="binding site" evidence="2">
    <location>
        <position position="102"/>
    </location>
    <ligand>
        <name>carbamoyl phosphate</name>
        <dbReference type="ChEBI" id="CHEBI:58228"/>
    </ligand>
</feature>
<feature type="binding site" evidence="2">
    <location>
        <begin position="129"/>
        <end position="132"/>
    </location>
    <ligand>
        <name>carbamoyl phosphate</name>
        <dbReference type="ChEBI" id="CHEBI:58228"/>
    </ligand>
</feature>
<feature type="binding site" evidence="2">
    <location>
        <position position="160"/>
    </location>
    <ligand>
        <name>L-ornithine</name>
        <dbReference type="ChEBI" id="CHEBI:46911"/>
    </ligand>
</feature>
<feature type="binding site" evidence="2">
    <location>
        <position position="224"/>
    </location>
    <ligand>
        <name>L-ornithine</name>
        <dbReference type="ChEBI" id="CHEBI:46911"/>
    </ligand>
</feature>
<feature type="binding site" evidence="2">
    <location>
        <begin position="228"/>
        <end position="229"/>
    </location>
    <ligand>
        <name>L-ornithine</name>
        <dbReference type="ChEBI" id="CHEBI:46911"/>
    </ligand>
</feature>
<feature type="binding site" evidence="2">
    <location>
        <begin position="264"/>
        <end position="265"/>
    </location>
    <ligand>
        <name>carbamoyl phosphate</name>
        <dbReference type="ChEBI" id="CHEBI:58228"/>
    </ligand>
</feature>
<feature type="binding site" evidence="2">
    <location>
        <position position="292"/>
    </location>
    <ligand>
        <name>carbamoyl phosphate</name>
        <dbReference type="ChEBI" id="CHEBI:58228"/>
    </ligand>
</feature>
<sequence>MRHFLSLNELTKDEILYLVDLACRLKSEVKRGFFFPYLKHKALGLIFTKASTRTRVSFEVGINQLGGYSLYLSKNDLQLGRGETIEDTAKVLSRYLDLIVIRTYAQSEVEEFAKYSSIPVINGLTDDYHPTQIIADFQTIFEEKGRLKDLKIAYIGDGNNVAATLLVGASKLGLDIAVATPKGYEIKKEVVDFAKDEAKRSGSNLIFTDNPKEAVKDADVVYTDTWVSMGQEEEKEKRIKDFEGYQVTQELMKLAKEDAIFLHCLPAYRGFEVTPEVIDGPQSKVFDEAENRLHAHKAIMVFVCLGRI</sequence>
<organism>
    <name type="scientific">Caldicellulosiruptor saccharolyticus (strain ATCC 43494 / DSM 8903 / Tp8T 6331)</name>
    <dbReference type="NCBI Taxonomy" id="351627"/>
    <lineage>
        <taxon>Bacteria</taxon>
        <taxon>Bacillati</taxon>
        <taxon>Bacillota</taxon>
        <taxon>Bacillota incertae sedis</taxon>
        <taxon>Caldicellulosiruptorales</taxon>
        <taxon>Caldicellulosiruptoraceae</taxon>
        <taxon>Caldicellulosiruptor</taxon>
    </lineage>
</organism>
<keyword id="KW-0028">Amino-acid biosynthesis</keyword>
<keyword id="KW-0055">Arginine biosynthesis</keyword>
<keyword id="KW-0963">Cytoplasm</keyword>
<keyword id="KW-0808">Transferase</keyword>
<comment type="function">
    <text evidence="1">Reversibly catalyzes the transfer of the carbamoyl group from carbamoyl phosphate (CP) to the N(epsilon) atom of ornithine (ORN) to produce L-citrulline.</text>
</comment>
<comment type="catalytic activity">
    <reaction evidence="2">
        <text>carbamoyl phosphate + L-ornithine = L-citrulline + phosphate + H(+)</text>
        <dbReference type="Rhea" id="RHEA:19513"/>
        <dbReference type="ChEBI" id="CHEBI:15378"/>
        <dbReference type="ChEBI" id="CHEBI:43474"/>
        <dbReference type="ChEBI" id="CHEBI:46911"/>
        <dbReference type="ChEBI" id="CHEBI:57743"/>
        <dbReference type="ChEBI" id="CHEBI:58228"/>
        <dbReference type="EC" id="2.1.3.3"/>
    </reaction>
</comment>
<comment type="pathway">
    <text evidence="2">Amino-acid biosynthesis; L-arginine biosynthesis; L-arginine from L-ornithine and carbamoyl phosphate: step 1/3.</text>
</comment>
<comment type="subcellular location">
    <subcellularLocation>
        <location evidence="2">Cytoplasm</location>
    </subcellularLocation>
</comment>
<comment type="similarity">
    <text evidence="2">Belongs to the aspartate/ornithine carbamoyltransferase superfamily. OTCase family.</text>
</comment>
<evidence type="ECO:0000250" key="1"/>
<evidence type="ECO:0000255" key="2">
    <source>
        <dbReference type="HAMAP-Rule" id="MF_01109"/>
    </source>
</evidence>
<proteinExistence type="inferred from homology"/>
<dbReference type="EC" id="2.1.3.3" evidence="2"/>
<dbReference type="EMBL" id="CP000679">
    <property type="protein sequence ID" value="ABP67807.1"/>
    <property type="molecule type" value="Genomic_DNA"/>
</dbReference>
<dbReference type="RefSeq" id="WP_011917733.1">
    <property type="nucleotide sequence ID" value="NC_009437.1"/>
</dbReference>
<dbReference type="SMR" id="A4XLM2"/>
<dbReference type="STRING" id="351627.Csac_2229"/>
<dbReference type="KEGG" id="csc:Csac_2229"/>
<dbReference type="eggNOG" id="COG0078">
    <property type="taxonomic scope" value="Bacteria"/>
</dbReference>
<dbReference type="HOGENOM" id="CLU_043846_3_2_9"/>
<dbReference type="OrthoDB" id="9802587at2"/>
<dbReference type="UniPathway" id="UPA00068">
    <property type="reaction ID" value="UER00112"/>
</dbReference>
<dbReference type="Proteomes" id="UP000000256">
    <property type="component" value="Chromosome"/>
</dbReference>
<dbReference type="GO" id="GO:0005737">
    <property type="term" value="C:cytoplasm"/>
    <property type="evidence" value="ECO:0007669"/>
    <property type="project" value="UniProtKB-SubCell"/>
</dbReference>
<dbReference type="GO" id="GO:0016597">
    <property type="term" value="F:amino acid binding"/>
    <property type="evidence" value="ECO:0007669"/>
    <property type="project" value="InterPro"/>
</dbReference>
<dbReference type="GO" id="GO:0004585">
    <property type="term" value="F:ornithine carbamoyltransferase activity"/>
    <property type="evidence" value="ECO:0007669"/>
    <property type="project" value="UniProtKB-UniRule"/>
</dbReference>
<dbReference type="GO" id="GO:0042450">
    <property type="term" value="P:arginine biosynthetic process via ornithine"/>
    <property type="evidence" value="ECO:0007669"/>
    <property type="project" value="TreeGrafter"/>
</dbReference>
<dbReference type="GO" id="GO:0019240">
    <property type="term" value="P:citrulline biosynthetic process"/>
    <property type="evidence" value="ECO:0007669"/>
    <property type="project" value="TreeGrafter"/>
</dbReference>
<dbReference type="GO" id="GO:0006526">
    <property type="term" value="P:L-arginine biosynthetic process"/>
    <property type="evidence" value="ECO:0007669"/>
    <property type="project" value="UniProtKB-UniRule"/>
</dbReference>
<dbReference type="FunFam" id="3.40.50.1370:FF:000008">
    <property type="entry name" value="Ornithine carbamoyltransferase"/>
    <property type="match status" value="1"/>
</dbReference>
<dbReference type="Gene3D" id="3.40.50.1370">
    <property type="entry name" value="Aspartate/ornithine carbamoyltransferase"/>
    <property type="match status" value="2"/>
</dbReference>
<dbReference type="HAMAP" id="MF_01109">
    <property type="entry name" value="OTCase"/>
    <property type="match status" value="1"/>
</dbReference>
<dbReference type="InterPro" id="IPR006132">
    <property type="entry name" value="Asp/Orn_carbamoyltranf_P-bd"/>
</dbReference>
<dbReference type="InterPro" id="IPR006130">
    <property type="entry name" value="Asp/Orn_carbamoylTrfase"/>
</dbReference>
<dbReference type="InterPro" id="IPR036901">
    <property type="entry name" value="Asp/Orn_carbamoylTrfase_sf"/>
</dbReference>
<dbReference type="InterPro" id="IPR006131">
    <property type="entry name" value="Asp_carbamoyltransf_Asp/Orn-bd"/>
</dbReference>
<dbReference type="InterPro" id="IPR002292">
    <property type="entry name" value="Orn/put_carbamltrans"/>
</dbReference>
<dbReference type="InterPro" id="IPR024904">
    <property type="entry name" value="OTCase_ArgI"/>
</dbReference>
<dbReference type="NCBIfam" id="TIGR00658">
    <property type="entry name" value="orni_carb_tr"/>
    <property type="match status" value="1"/>
</dbReference>
<dbReference type="NCBIfam" id="NF001986">
    <property type="entry name" value="PRK00779.1"/>
    <property type="match status" value="1"/>
</dbReference>
<dbReference type="PANTHER" id="PTHR45753">
    <property type="entry name" value="ORNITHINE CARBAMOYLTRANSFERASE, MITOCHONDRIAL"/>
    <property type="match status" value="1"/>
</dbReference>
<dbReference type="PANTHER" id="PTHR45753:SF3">
    <property type="entry name" value="ORNITHINE TRANSCARBAMYLASE, MITOCHONDRIAL"/>
    <property type="match status" value="1"/>
</dbReference>
<dbReference type="Pfam" id="PF00185">
    <property type="entry name" value="OTCace"/>
    <property type="match status" value="1"/>
</dbReference>
<dbReference type="Pfam" id="PF02729">
    <property type="entry name" value="OTCace_N"/>
    <property type="match status" value="1"/>
</dbReference>
<dbReference type="PRINTS" id="PR00100">
    <property type="entry name" value="AOTCASE"/>
</dbReference>
<dbReference type="PRINTS" id="PR00102">
    <property type="entry name" value="OTCASE"/>
</dbReference>
<dbReference type="SUPFAM" id="SSF53671">
    <property type="entry name" value="Aspartate/ornithine carbamoyltransferase"/>
    <property type="match status" value="1"/>
</dbReference>
<dbReference type="PROSITE" id="PS00097">
    <property type="entry name" value="CARBAMOYLTRANSFERASE"/>
    <property type="match status" value="1"/>
</dbReference>
<reference key="1">
    <citation type="submission" date="2007-04" db="EMBL/GenBank/DDBJ databases">
        <title>Genome sequence of the thermophilic hydrogen-producing bacterium Caldicellulosiruptor saccharolyticus DSM 8903.</title>
        <authorList>
            <person name="Copeland A."/>
            <person name="Lucas S."/>
            <person name="Lapidus A."/>
            <person name="Barry K."/>
            <person name="Detter J.C."/>
            <person name="Glavina del Rio T."/>
            <person name="Hammon N."/>
            <person name="Israni S."/>
            <person name="Dalin E."/>
            <person name="Tice H."/>
            <person name="Pitluck S."/>
            <person name="Kiss H."/>
            <person name="Brettin T."/>
            <person name="Bruce D."/>
            <person name="Han C."/>
            <person name="Schmutz J."/>
            <person name="Larimer F."/>
            <person name="Land M."/>
            <person name="Hauser L."/>
            <person name="Kyrpides N."/>
            <person name="Lykidis A."/>
            <person name="van de Werken H.J.G."/>
            <person name="Verhaart M.R.A."/>
            <person name="VanFossen A.L."/>
            <person name="Lewis D.L."/>
            <person name="Nichols J.D."/>
            <person name="Goorissen H.P."/>
            <person name="van Niel E.W.J."/>
            <person name="Stams F.J.M."/>
            <person name="Willquist K.U."/>
            <person name="Ward D.E."/>
            <person name="van der Oost J."/>
            <person name="Kelly R.M."/>
            <person name="Kengen S.M.W."/>
            <person name="Richardson P."/>
        </authorList>
    </citation>
    <scope>NUCLEOTIDE SEQUENCE [LARGE SCALE GENOMIC DNA]</scope>
    <source>
        <strain>ATCC 43494 / DSM 8903 / Tp8T 6331</strain>
    </source>
</reference>
<name>OTC_CALS8</name>
<accession>A4XLM2</accession>
<protein>
    <recommendedName>
        <fullName evidence="2">Ornithine carbamoyltransferase</fullName>
        <shortName evidence="2">OTCase</shortName>
        <ecNumber evidence="2">2.1.3.3</ecNumber>
    </recommendedName>
</protein>